<proteinExistence type="inferred from homology"/>
<organism>
    <name type="scientific">Pseudomonas fluorescens (strain ATCC BAA-477 / NRRL B-23932 / Pf-5)</name>
    <dbReference type="NCBI Taxonomy" id="220664"/>
    <lineage>
        <taxon>Bacteria</taxon>
        <taxon>Pseudomonadati</taxon>
        <taxon>Pseudomonadota</taxon>
        <taxon>Gammaproteobacteria</taxon>
        <taxon>Pseudomonadales</taxon>
        <taxon>Pseudomonadaceae</taxon>
        <taxon>Pseudomonas</taxon>
    </lineage>
</organism>
<accession>Q4KGH6</accession>
<name>ACEK_PSEF5</name>
<dbReference type="EC" id="2.7.11.5" evidence="1"/>
<dbReference type="EC" id="3.1.3.-" evidence="1"/>
<dbReference type="EMBL" id="CP000076">
    <property type="protein sequence ID" value="AAY90813.1"/>
    <property type="molecule type" value="Genomic_DNA"/>
</dbReference>
<dbReference type="RefSeq" id="WP_011059868.1">
    <property type="nucleotide sequence ID" value="NC_004129.6"/>
</dbReference>
<dbReference type="SMR" id="Q4KGH6"/>
<dbReference type="STRING" id="220664.PFL_1530"/>
<dbReference type="GeneID" id="57474552"/>
<dbReference type="KEGG" id="pfl:PFL_1530"/>
<dbReference type="PATRIC" id="fig|220664.5.peg.1564"/>
<dbReference type="eggNOG" id="COG4579">
    <property type="taxonomic scope" value="Bacteria"/>
</dbReference>
<dbReference type="HOGENOM" id="CLU_033804_1_1_6"/>
<dbReference type="Proteomes" id="UP000008540">
    <property type="component" value="Chromosome"/>
</dbReference>
<dbReference type="GO" id="GO:0005737">
    <property type="term" value="C:cytoplasm"/>
    <property type="evidence" value="ECO:0007669"/>
    <property type="project" value="UniProtKB-SubCell"/>
</dbReference>
<dbReference type="GO" id="GO:0008772">
    <property type="term" value="F:[isocitrate dehydrogenase (NADP+)] kinase activity"/>
    <property type="evidence" value="ECO:0007669"/>
    <property type="project" value="UniProtKB-UniRule"/>
</dbReference>
<dbReference type="GO" id="GO:0016208">
    <property type="term" value="F:AMP binding"/>
    <property type="evidence" value="ECO:0007669"/>
    <property type="project" value="TreeGrafter"/>
</dbReference>
<dbReference type="GO" id="GO:0005524">
    <property type="term" value="F:ATP binding"/>
    <property type="evidence" value="ECO:0007669"/>
    <property type="project" value="UniProtKB-UniRule"/>
</dbReference>
<dbReference type="GO" id="GO:0004721">
    <property type="term" value="F:phosphoprotein phosphatase activity"/>
    <property type="evidence" value="ECO:0007669"/>
    <property type="project" value="UniProtKB-KW"/>
</dbReference>
<dbReference type="GO" id="GO:0004674">
    <property type="term" value="F:protein serine/threonine kinase activity"/>
    <property type="evidence" value="ECO:0007669"/>
    <property type="project" value="UniProtKB-KW"/>
</dbReference>
<dbReference type="GO" id="GO:0006006">
    <property type="term" value="P:glucose metabolic process"/>
    <property type="evidence" value="ECO:0007669"/>
    <property type="project" value="InterPro"/>
</dbReference>
<dbReference type="GO" id="GO:0006097">
    <property type="term" value="P:glyoxylate cycle"/>
    <property type="evidence" value="ECO:0007669"/>
    <property type="project" value="UniProtKB-UniRule"/>
</dbReference>
<dbReference type="GO" id="GO:0006099">
    <property type="term" value="P:tricarboxylic acid cycle"/>
    <property type="evidence" value="ECO:0007669"/>
    <property type="project" value="UniProtKB-UniRule"/>
</dbReference>
<dbReference type="HAMAP" id="MF_00747">
    <property type="entry name" value="AceK"/>
    <property type="match status" value="1"/>
</dbReference>
<dbReference type="InterPro" id="IPR046855">
    <property type="entry name" value="AceK_kinase"/>
</dbReference>
<dbReference type="InterPro" id="IPR046854">
    <property type="entry name" value="AceK_regulatory"/>
</dbReference>
<dbReference type="InterPro" id="IPR010452">
    <property type="entry name" value="Isocitrate_DH_AceK"/>
</dbReference>
<dbReference type="NCBIfam" id="NF002804">
    <property type="entry name" value="PRK02946.1"/>
    <property type="match status" value="1"/>
</dbReference>
<dbReference type="PANTHER" id="PTHR39559">
    <property type="match status" value="1"/>
</dbReference>
<dbReference type="PANTHER" id="PTHR39559:SF1">
    <property type="entry name" value="ISOCITRATE DEHYDROGENASE KINASE_PHOSPHATASE"/>
    <property type="match status" value="1"/>
</dbReference>
<dbReference type="Pfam" id="PF06315">
    <property type="entry name" value="AceK_kinase"/>
    <property type="match status" value="1"/>
</dbReference>
<dbReference type="Pfam" id="PF20423">
    <property type="entry name" value="AceK_regulatory"/>
    <property type="match status" value="1"/>
</dbReference>
<dbReference type="PIRSF" id="PIRSF000719">
    <property type="entry name" value="AceK"/>
    <property type="match status" value="1"/>
</dbReference>
<evidence type="ECO:0000255" key="1">
    <source>
        <dbReference type="HAMAP-Rule" id="MF_00747"/>
    </source>
</evidence>
<gene>
    <name evidence="1" type="primary">aceK</name>
    <name type="ordered locus">PFL_1530</name>
</gene>
<feature type="chain" id="PRO_0000259153" description="Isocitrate dehydrogenase kinase/phosphatase">
    <location>
        <begin position="1"/>
        <end position="573"/>
    </location>
</feature>
<feature type="active site" evidence="1">
    <location>
        <position position="373"/>
    </location>
</feature>
<feature type="binding site" evidence="1">
    <location>
        <begin position="317"/>
        <end position="323"/>
    </location>
    <ligand>
        <name>ATP</name>
        <dbReference type="ChEBI" id="CHEBI:30616"/>
    </ligand>
</feature>
<feature type="binding site" evidence="1">
    <location>
        <position position="338"/>
    </location>
    <ligand>
        <name>ATP</name>
        <dbReference type="ChEBI" id="CHEBI:30616"/>
    </ligand>
</feature>
<reference key="1">
    <citation type="journal article" date="2005" name="Nat. Biotechnol.">
        <title>Complete genome sequence of the plant commensal Pseudomonas fluorescens Pf-5.</title>
        <authorList>
            <person name="Paulsen I.T."/>
            <person name="Press C.M."/>
            <person name="Ravel J."/>
            <person name="Kobayashi D.Y."/>
            <person name="Myers G.S.A."/>
            <person name="Mavrodi D.V."/>
            <person name="DeBoy R.T."/>
            <person name="Seshadri R."/>
            <person name="Ren Q."/>
            <person name="Madupu R."/>
            <person name="Dodson R.J."/>
            <person name="Durkin A.S."/>
            <person name="Brinkac L.M."/>
            <person name="Daugherty S.C."/>
            <person name="Sullivan S.A."/>
            <person name="Rosovitz M.J."/>
            <person name="Gwinn M.L."/>
            <person name="Zhou L."/>
            <person name="Schneider D.J."/>
            <person name="Cartinhour S.W."/>
            <person name="Nelson W.C."/>
            <person name="Weidman J."/>
            <person name="Watkins K."/>
            <person name="Tran K."/>
            <person name="Khouri H."/>
            <person name="Pierson E.A."/>
            <person name="Pierson L.S. III"/>
            <person name="Thomashow L.S."/>
            <person name="Loper J.E."/>
        </authorList>
    </citation>
    <scope>NUCLEOTIDE SEQUENCE [LARGE SCALE GENOMIC DNA]</scope>
    <source>
        <strain>ATCC BAA-477 / NRRL B-23932 / Pf-5</strain>
    </source>
</reference>
<sequence length="573" mass="66095">MSQSWPAADIARMILDGFDDYREHFRQITDGARQRFEQAQWQQAQKASAARINLYEEKVGETVARLHQAFSTESLMDVSQWPLVKSAYISLIDLRFDDELSETWYNSIFCGLFSHDLISDGCMFIHTTRPSLRRARAAQTRSYKPQGELATMLEQVFADYRFSEDYADLPGDLRRLEAQLRENLPDWVCKDPELTLELFSSVLYRNKGAYLVGRIFTHEEQWPLVIPLLHREGRGIQIDALITDEADVSIIFSFTRSYFMVDVPVPAEFIGFLKRILPGKHIAELYTSIGFYKHGKSEFYRALINHLASTDDRFIMAPGVRGMVMSVFTLPGFNTVFKIIKDRFSPSKNVDRATVIEKYRLVKSVDRVGRMADTQEFADFRFPLSKFDPACLEELLEVAPSTVAVEGQTVLIRHCWTERRMTPLNLYLEHANEAQVREALEDYGLAIKQLAAANIFPGDMLLKNFGVTRHGRVVFYDYDEICFLTEANFRHIPAPRTPEDEMASEPWYSIGPHDVFPEEFPPFLFADAGQRKLFDQLHGELYNADYWKGLQEAIRAGKVIDVFPYRRQGLEDE</sequence>
<keyword id="KW-0067">ATP-binding</keyword>
<keyword id="KW-0963">Cytoplasm</keyword>
<keyword id="KW-0329">Glyoxylate bypass</keyword>
<keyword id="KW-0378">Hydrolase</keyword>
<keyword id="KW-0418">Kinase</keyword>
<keyword id="KW-0547">Nucleotide-binding</keyword>
<keyword id="KW-0904">Protein phosphatase</keyword>
<keyword id="KW-0723">Serine/threonine-protein kinase</keyword>
<keyword id="KW-0808">Transferase</keyword>
<keyword id="KW-0816">Tricarboxylic acid cycle</keyword>
<comment type="function">
    <text evidence="1">Bifunctional enzyme which can phosphorylate or dephosphorylate isocitrate dehydrogenase (IDH) on a specific serine residue. This is a regulatory mechanism which enables bacteria to bypass the Krebs cycle via the glyoxylate shunt in response to the source of carbon. When bacteria are grown on glucose, IDH is fully active and unphosphorylated, but when grown on acetate or ethanol, the activity of IDH declines drastically concomitant with its phosphorylation.</text>
</comment>
<comment type="catalytic activity">
    <reaction evidence="1">
        <text>L-seryl-[isocitrate dehydrogenase] + ATP = O-phospho-L-seryl-[isocitrate dehydrogenase] + ADP + H(+)</text>
        <dbReference type="Rhea" id="RHEA:43540"/>
        <dbReference type="Rhea" id="RHEA-COMP:10605"/>
        <dbReference type="Rhea" id="RHEA-COMP:10606"/>
        <dbReference type="ChEBI" id="CHEBI:15378"/>
        <dbReference type="ChEBI" id="CHEBI:29999"/>
        <dbReference type="ChEBI" id="CHEBI:30616"/>
        <dbReference type="ChEBI" id="CHEBI:83421"/>
        <dbReference type="ChEBI" id="CHEBI:456216"/>
        <dbReference type="EC" id="2.7.11.5"/>
    </reaction>
</comment>
<comment type="subcellular location">
    <subcellularLocation>
        <location evidence="1">Cytoplasm</location>
    </subcellularLocation>
</comment>
<comment type="similarity">
    <text evidence="1">Belongs to the AceK family.</text>
</comment>
<protein>
    <recommendedName>
        <fullName evidence="1">Isocitrate dehydrogenase kinase/phosphatase</fullName>
        <shortName evidence="1">IDH kinase/phosphatase</shortName>
        <shortName evidence="1">IDHK/P</shortName>
        <ecNumber evidence="1">2.7.11.5</ecNumber>
        <ecNumber evidence="1">3.1.3.-</ecNumber>
    </recommendedName>
</protein>